<comment type="function">
    <text evidence="1">Attaches a formyl group to the free amino group of methionyl-tRNA(fMet). The formyl group appears to play a dual role in the initiator identity of N-formylmethionyl-tRNA by promoting its recognition by IF2 and preventing the misappropriation of this tRNA by the elongation apparatus.</text>
</comment>
<comment type="catalytic activity">
    <reaction evidence="1">
        <text>L-methionyl-tRNA(fMet) + (6R)-10-formyltetrahydrofolate = N-formyl-L-methionyl-tRNA(fMet) + (6S)-5,6,7,8-tetrahydrofolate + H(+)</text>
        <dbReference type="Rhea" id="RHEA:24380"/>
        <dbReference type="Rhea" id="RHEA-COMP:9952"/>
        <dbReference type="Rhea" id="RHEA-COMP:9953"/>
        <dbReference type="ChEBI" id="CHEBI:15378"/>
        <dbReference type="ChEBI" id="CHEBI:57453"/>
        <dbReference type="ChEBI" id="CHEBI:78530"/>
        <dbReference type="ChEBI" id="CHEBI:78844"/>
        <dbReference type="ChEBI" id="CHEBI:195366"/>
        <dbReference type="EC" id="2.1.2.9"/>
    </reaction>
</comment>
<comment type="similarity">
    <text evidence="1">Belongs to the Fmt family.</text>
</comment>
<protein>
    <recommendedName>
        <fullName evidence="1">Methionyl-tRNA formyltransferase</fullName>
        <ecNumber evidence="1">2.1.2.9</ecNumber>
    </recommendedName>
</protein>
<keyword id="KW-0648">Protein biosynthesis</keyword>
<keyword id="KW-1185">Reference proteome</keyword>
<keyword id="KW-0808">Transferase</keyword>
<sequence length="307" mass="32046">MRVLFAGTPAVALPSLEALLAAGFDVVGVLTRPDAPIGRKRVLAPSPVAARAEELGLPIIRANRLDTEVQEQIALLRPEVAAIVAYGALVPPAALTIPDYGWINLHFSLLPAWRGAAPVQHAVINGDDVTGAVTFQLEAGLDTGPVFGTVTEFIRRDDTGSALLTRLSHSGSVLLTQTLSAVAAGTATAIEQTGPVSLAPKLTIEDGRIDFSVPALAVSRRIRGVTEEPGAWTVLAGQRFKVAAATLRPDRRELAPGQLAQAGKSLLVGTGSHAIELLAVQPAGKKMMDAADWLRGVGMVDGMVFGE</sequence>
<reference key="1">
    <citation type="journal article" date="2008" name="J. Bacteriol.">
        <title>Genome sequence of the fish pathogen Renibacterium salmoninarum suggests reductive evolution away from an environmental Arthrobacter ancestor.</title>
        <authorList>
            <person name="Wiens G.D."/>
            <person name="Rockey D.D."/>
            <person name="Wu Z."/>
            <person name="Chang J."/>
            <person name="Levy R."/>
            <person name="Crane S."/>
            <person name="Chen D.S."/>
            <person name="Capri G.R."/>
            <person name="Burnett J.R."/>
            <person name="Sudheesh P.S."/>
            <person name="Schipma M.J."/>
            <person name="Burd H."/>
            <person name="Bhattacharyya A."/>
            <person name="Rhodes L.D."/>
            <person name="Kaul R."/>
            <person name="Strom M.S."/>
        </authorList>
    </citation>
    <scope>NUCLEOTIDE SEQUENCE [LARGE SCALE GENOMIC DNA]</scope>
    <source>
        <strain>ATCC 33209 / DSM 20767 / JCM 11484 / NBRC 15589 / NCIMB 2235</strain>
    </source>
</reference>
<name>FMT_RENSM</name>
<evidence type="ECO:0000255" key="1">
    <source>
        <dbReference type="HAMAP-Rule" id="MF_00182"/>
    </source>
</evidence>
<dbReference type="EC" id="2.1.2.9" evidence="1"/>
<dbReference type="EMBL" id="CP000910">
    <property type="protein sequence ID" value="ABY24083.1"/>
    <property type="molecule type" value="Genomic_DNA"/>
</dbReference>
<dbReference type="RefSeq" id="WP_012245746.1">
    <property type="nucleotide sequence ID" value="NC_010168.1"/>
</dbReference>
<dbReference type="SMR" id="A9WR74"/>
<dbReference type="STRING" id="288705.RSal33209_2353"/>
<dbReference type="KEGG" id="rsa:RSal33209_2353"/>
<dbReference type="eggNOG" id="COG0223">
    <property type="taxonomic scope" value="Bacteria"/>
</dbReference>
<dbReference type="HOGENOM" id="CLU_033347_1_0_11"/>
<dbReference type="Proteomes" id="UP000002007">
    <property type="component" value="Chromosome"/>
</dbReference>
<dbReference type="GO" id="GO:0005829">
    <property type="term" value="C:cytosol"/>
    <property type="evidence" value="ECO:0007669"/>
    <property type="project" value="TreeGrafter"/>
</dbReference>
<dbReference type="GO" id="GO:0004479">
    <property type="term" value="F:methionyl-tRNA formyltransferase activity"/>
    <property type="evidence" value="ECO:0007669"/>
    <property type="project" value="UniProtKB-UniRule"/>
</dbReference>
<dbReference type="CDD" id="cd08646">
    <property type="entry name" value="FMT_core_Met-tRNA-FMT_N"/>
    <property type="match status" value="1"/>
</dbReference>
<dbReference type="CDD" id="cd08704">
    <property type="entry name" value="Met_tRNA_FMT_C"/>
    <property type="match status" value="1"/>
</dbReference>
<dbReference type="Gene3D" id="3.40.50.12230">
    <property type="match status" value="1"/>
</dbReference>
<dbReference type="HAMAP" id="MF_00182">
    <property type="entry name" value="Formyl_trans"/>
    <property type="match status" value="1"/>
</dbReference>
<dbReference type="InterPro" id="IPR005794">
    <property type="entry name" value="Fmt"/>
</dbReference>
<dbReference type="InterPro" id="IPR005793">
    <property type="entry name" value="Formyl_trans_C"/>
</dbReference>
<dbReference type="InterPro" id="IPR002376">
    <property type="entry name" value="Formyl_transf_N"/>
</dbReference>
<dbReference type="InterPro" id="IPR036477">
    <property type="entry name" value="Formyl_transf_N_sf"/>
</dbReference>
<dbReference type="InterPro" id="IPR011034">
    <property type="entry name" value="Formyl_transferase-like_C_sf"/>
</dbReference>
<dbReference type="InterPro" id="IPR044135">
    <property type="entry name" value="Met-tRNA-FMT_C"/>
</dbReference>
<dbReference type="InterPro" id="IPR041711">
    <property type="entry name" value="Met-tRNA-FMT_N"/>
</dbReference>
<dbReference type="NCBIfam" id="TIGR00460">
    <property type="entry name" value="fmt"/>
    <property type="match status" value="1"/>
</dbReference>
<dbReference type="PANTHER" id="PTHR11138">
    <property type="entry name" value="METHIONYL-TRNA FORMYLTRANSFERASE"/>
    <property type="match status" value="1"/>
</dbReference>
<dbReference type="PANTHER" id="PTHR11138:SF5">
    <property type="entry name" value="METHIONYL-TRNA FORMYLTRANSFERASE, MITOCHONDRIAL"/>
    <property type="match status" value="1"/>
</dbReference>
<dbReference type="Pfam" id="PF02911">
    <property type="entry name" value="Formyl_trans_C"/>
    <property type="match status" value="1"/>
</dbReference>
<dbReference type="Pfam" id="PF00551">
    <property type="entry name" value="Formyl_trans_N"/>
    <property type="match status" value="1"/>
</dbReference>
<dbReference type="SUPFAM" id="SSF50486">
    <property type="entry name" value="FMT C-terminal domain-like"/>
    <property type="match status" value="1"/>
</dbReference>
<dbReference type="SUPFAM" id="SSF53328">
    <property type="entry name" value="Formyltransferase"/>
    <property type="match status" value="1"/>
</dbReference>
<accession>A9WR74</accession>
<gene>
    <name evidence="1" type="primary">fmt</name>
    <name type="ordered locus">RSal33209_2353</name>
</gene>
<feature type="chain" id="PRO_1000077313" description="Methionyl-tRNA formyltransferase">
    <location>
        <begin position="1"/>
        <end position="307"/>
    </location>
</feature>
<feature type="binding site" evidence="1">
    <location>
        <begin position="108"/>
        <end position="111"/>
    </location>
    <ligand>
        <name>(6S)-5,6,7,8-tetrahydrofolate</name>
        <dbReference type="ChEBI" id="CHEBI:57453"/>
    </ligand>
</feature>
<organism>
    <name type="scientific">Renibacterium salmoninarum (strain ATCC 33209 / DSM 20767 / JCM 11484 / NBRC 15589 / NCIMB 2235)</name>
    <dbReference type="NCBI Taxonomy" id="288705"/>
    <lineage>
        <taxon>Bacteria</taxon>
        <taxon>Bacillati</taxon>
        <taxon>Actinomycetota</taxon>
        <taxon>Actinomycetes</taxon>
        <taxon>Micrococcales</taxon>
        <taxon>Micrococcaceae</taxon>
        <taxon>Renibacterium</taxon>
    </lineage>
</organism>
<proteinExistence type="inferred from homology"/>